<proteinExistence type="predicted"/>
<protein>
    <recommendedName>
        <fullName>Uncharacterized gene 2 protein</fullName>
    </recommendedName>
</protein>
<dbReference type="EMBL" id="AY665713">
    <property type="protein sequence ID" value="AAT67259.1"/>
    <property type="molecule type" value="Genomic_DNA"/>
</dbReference>
<dbReference type="PIR" id="C36795">
    <property type="entry name" value="C36795"/>
</dbReference>
<dbReference type="SMR" id="P28979"/>
<dbReference type="KEGG" id="vg:1487547"/>
<dbReference type="Proteomes" id="UP000001189">
    <property type="component" value="Segment"/>
</dbReference>
<dbReference type="InterPro" id="IPR035262">
    <property type="entry name" value="DUF5435"/>
</dbReference>
<dbReference type="Pfam" id="PF17503">
    <property type="entry name" value="DUF5435"/>
    <property type="match status" value="1"/>
</dbReference>
<organismHost>
    <name type="scientific">Equus caballus</name>
    <name type="common">Horse</name>
    <dbReference type="NCBI Taxonomy" id="9796"/>
</organismHost>
<name>VG02_EHV1B</name>
<evidence type="ECO:0000256" key="1">
    <source>
        <dbReference type="SAM" id="MobiDB-lite"/>
    </source>
</evidence>
<feature type="chain" id="PRO_0000116156" description="Uncharacterized gene 2 protein">
    <location>
        <begin position="1"/>
        <end position="205"/>
    </location>
</feature>
<feature type="region of interest" description="Disordered" evidence="1">
    <location>
        <begin position="72"/>
        <end position="114"/>
    </location>
</feature>
<feature type="compositionally biased region" description="Polar residues" evidence="1">
    <location>
        <begin position="90"/>
        <end position="100"/>
    </location>
</feature>
<feature type="compositionally biased region" description="Low complexity" evidence="1">
    <location>
        <begin position="101"/>
        <end position="110"/>
    </location>
</feature>
<reference key="1">
    <citation type="journal article" date="1992" name="Virology">
        <title>The DNA sequence of equine herpesvirus-1.</title>
        <authorList>
            <person name="Telford E.A.R."/>
            <person name="Watson M.S."/>
            <person name="McBride K."/>
            <person name="Davison A.J."/>
        </authorList>
    </citation>
    <scope>NUCLEOTIDE SEQUENCE [LARGE SCALE GENOMIC DNA]</scope>
</reference>
<sequence length="205" mass="23400">MDPAWRRRIHVSNPTTINVEPRPRRESLRRQLLSQLFFKKMSQLFKKKRQTRPSTVWYGRVAFPPSAWQGPARVSPYGYESDSENEEYTRISSATSSNVLTDSPTTTQDDPTGRCTDAYAESPAVLHLDDVTRNHRGAAALPSEVYLDGFCDQHKDPSGRMGPIKRRLYSKTFCRKFAAINIILLMLQILVLIGIVYRGFGKECM</sequence>
<organism>
    <name type="scientific">Equine herpesvirus 1 (strain Ab4p)</name>
    <name type="common">EHV-1</name>
    <name type="synonym">Equine abortion virus</name>
    <dbReference type="NCBI Taxonomy" id="31520"/>
    <lineage>
        <taxon>Viruses</taxon>
        <taxon>Duplodnaviria</taxon>
        <taxon>Heunggongvirae</taxon>
        <taxon>Peploviricota</taxon>
        <taxon>Herviviricetes</taxon>
        <taxon>Herpesvirales</taxon>
        <taxon>Orthoherpesviridae</taxon>
        <taxon>Alphaherpesvirinae</taxon>
        <taxon>Varicellovirus</taxon>
        <taxon>Varicellovirus equidalpha1</taxon>
        <taxon>Equid alphaherpesvirus 1</taxon>
    </lineage>
</organism>
<keyword id="KW-1185">Reference proteome</keyword>
<accession>P28979</accession>
<accession>Q6DLK9</accession>
<gene>
    <name type="ordered locus">2</name>
</gene>